<feature type="chain" id="PRO_1000148371" description="Ribonuclease P protein component 3">
    <location>
        <begin position="1"/>
        <end position="240"/>
    </location>
</feature>
<evidence type="ECO:0000255" key="1">
    <source>
        <dbReference type="HAMAP-Rule" id="MF_00756"/>
    </source>
</evidence>
<name>RNP3_HALLT</name>
<dbReference type="EC" id="3.1.26.5" evidence="1"/>
<dbReference type="EMBL" id="CP001365">
    <property type="protein sequence ID" value="ACM56558.1"/>
    <property type="molecule type" value="Genomic_DNA"/>
</dbReference>
<dbReference type="RefSeq" id="WP_015909706.1">
    <property type="nucleotide sequence ID" value="NC_012029.1"/>
</dbReference>
<dbReference type="SMR" id="B9LMH0"/>
<dbReference type="GeneID" id="7401854"/>
<dbReference type="KEGG" id="hla:Hlac_0960"/>
<dbReference type="eggNOG" id="arCOG00307">
    <property type="taxonomic scope" value="Archaea"/>
</dbReference>
<dbReference type="HOGENOM" id="CLU_074509_1_0_2"/>
<dbReference type="Proteomes" id="UP000000740">
    <property type="component" value="Chromosome 1"/>
</dbReference>
<dbReference type="GO" id="GO:0005737">
    <property type="term" value="C:cytoplasm"/>
    <property type="evidence" value="ECO:0007669"/>
    <property type="project" value="UniProtKB-SubCell"/>
</dbReference>
<dbReference type="GO" id="GO:0030677">
    <property type="term" value="C:ribonuclease P complex"/>
    <property type="evidence" value="ECO:0007669"/>
    <property type="project" value="UniProtKB-UniRule"/>
</dbReference>
<dbReference type="GO" id="GO:0004526">
    <property type="term" value="F:ribonuclease P activity"/>
    <property type="evidence" value="ECO:0007669"/>
    <property type="project" value="UniProtKB-UniRule"/>
</dbReference>
<dbReference type="GO" id="GO:0001682">
    <property type="term" value="P:tRNA 5'-leader removal"/>
    <property type="evidence" value="ECO:0007669"/>
    <property type="project" value="UniProtKB-UniRule"/>
</dbReference>
<dbReference type="Gene3D" id="3.20.20.140">
    <property type="entry name" value="Metal-dependent hydrolases"/>
    <property type="match status" value="1"/>
</dbReference>
<dbReference type="HAMAP" id="MF_00756">
    <property type="entry name" value="RNase_P_3"/>
    <property type="match status" value="1"/>
</dbReference>
<dbReference type="InterPro" id="IPR016195">
    <property type="entry name" value="Pol/histidinol_Pase-like"/>
</dbReference>
<dbReference type="InterPro" id="IPR023539">
    <property type="entry name" value="RNase_P_comp-3_arc"/>
</dbReference>
<dbReference type="InterPro" id="IPR002738">
    <property type="entry name" value="RNase_P_p30"/>
</dbReference>
<dbReference type="Pfam" id="PF01876">
    <property type="entry name" value="RNase_P_p30"/>
    <property type="match status" value="1"/>
</dbReference>
<dbReference type="SUPFAM" id="SSF89550">
    <property type="entry name" value="PHP domain-like"/>
    <property type="match status" value="1"/>
</dbReference>
<sequence length="240" mass="26250">MYEAVHAHPDGDATVARHAATAERYGYEGIVVRTREALDPASKSSEHADEATALRDEYGIDVVDAVEIDADNATSASGAVGNYRSDRTVVCVVGGDDGLNRFAVEEPRVDVLVRPMGGGDFNHVLAKAARDNGVHVEFDLGPLFRATGGKRVRALADLRKLREIVTYYDTPHVVSANPRSHLDLRAPREVVAAAEAVGFDAEWVREGLRAWGEIATRNRERRSEAFIEPGVRRGRYEEDG</sequence>
<reference key="1">
    <citation type="journal article" date="2016" name="Stand. Genomic Sci.">
        <title>Complete genome sequence of the Antarctic Halorubrum lacusprofundi type strain ACAM 34.</title>
        <authorList>
            <person name="Anderson I.J."/>
            <person name="DasSarma P."/>
            <person name="Lucas S."/>
            <person name="Copeland A."/>
            <person name="Lapidus A."/>
            <person name="Del Rio T.G."/>
            <person name="Tice H."/>
            <person name="Dalin E."/>
            <person name="Bruce D.C."/>
            <person name="Goodwin L."/>
            <person name="Pitluck S."/>
            <person name="Sims D."/>
            <person name="Brettin T.S."/>
            <person name="Detter J.C."/>
            <person name="Han C.S."/>
            <person name="Larimer F."/>
            <person name="Hauser L."/>
            <person name="Land M."/>
            <person name="Ivanova N."/>
            <person name="Richardson P."/>
            <person name="Cavicchioli R."/>
            <person name="DasSarma S."/>
            <person name="Woese C.R."/>
            <person name="Kyrpides N.C."/>
        </authorList>
    </citation>
    <scope>NUCLEOTIDE SEQUENCE [LARGE SCALE GENOMIC DNA]</scope>
    <source>
        <strain>ATCC 49239 / DSM 5036 / JCM 8891 / ACAM 34</strain>
    </source>
</reference>
<accession>B9LMH0</accession>
<comment type="function">
    <text evidence="1">Part of ribonuclease P, a protein complex that generates mature tRNA molecules by cleaving their 5'-ends.</text>
</comment>
<comment type="catalytic activity">
    <reaction evidence="1">
        <text>Endonucleolytic cleavage of RNA, removing 5'-extranucleotides from tRNA precursor.</text>
        <dbReference type="EC" id="3.1.26.5"/>
    </reaction>
</comment>
<comment type="subunit">
    <text evidence="1">Consists of a catalytic RNA component and at least 4-5 protein subunits.</text>
</comment>
<comment type="subcellular location">
    <subcellularLocation>
        <location evidence="1">Cytoplasm</location>
    </subcellularLocation>
</comment>
<comment type="similarity">
    <text evidence="1">Belongs to the eukaryotic/archaeal RNase P protein component 3 family.</text>
</comment>
<proteinExistence type="inferred from homology"/>
<protein>
    <recommendedName>
        <fullName evidence="1">Ribonuclease P protein component 3</fullName>
        <shortName evidence="1">RNase P component 3</shortName>
        <ecNumber evidence="1">3.1.26.5</ecNumber>
    </recommendedName>
    <alternativeName>
        <fullName evidence="1">Rpp30</fullName>
    </alternativeName>
</protein>
<gene>
    <name evidence="1" type="primary">rnp3</name>
    <name type="ordered locus">Hlac_0960</name>
</gene>
<organism>
    <name type="scientific">Halorubrum lacusprofundi (strain ATCC 49239 / DSM 5036 / JCM 8891 / ACAM 34)</name>
    <dbReference type="NCBI Taxonomy" id="416348"/>
    <lineage>
        <taxon>Archaea</taxon>
        <taxon>Methanobacteriati</taxon>
        <taxon>Methanobacteriota</taxon>
        <taxon>Stenosarchaea group</taxon>
        <taxon>Halobacteria</taxon>
        <taxon>Halobacteriales</taxon>
        <taxon>Haloferacaceae</taxon>
        <taxon>Halorubrum</taxon>
    </lineage>
</organism>
<keyword id="KW-0963">Cytoplasm</keyword>
<keyword id="KW-0255">Endonuclease</keyword>
<keyword id="KW-0378">Hydrolase</keyword>
<keyword id="KW-0540">Nuclease</keyword>
<keyword id="KW-1185">Reference proteome</keyword>
<keyword id="KW-0819">tRNA processing</keyword>